<proteinExistence type="inferred from homology"/>
<protein>
    <recommendedName>
        <fullName evidence="1">Succinate--CoA ligase [ADP-forming] subunit beta</fullName>
        <ecNumber evidence="1">6.2.1.5</ecNumber>
    </recommendedName>
    <alternativeName>
        <fullName evidence="1">Succinyl-CoA synthetase subunit beta</fullName>
        <shortName evidence="1">SCS-beta</shortName>
    </alternativeName>
</protein>
<comment type="function">
    <text evidence="1">Succinyl-CoA synthetase functions in the citric acid cycle (TCA), coupling the hydrolysis of succinyl-CoA to the synthesis of either ATP or GTP and thus represents the only step of substrate-level phosphorylation in the TCA. The beta subunit provides nucleotide specificity of the enzyme and binds the substrate succinate, while the binding sites for coenzyme A and phosphate are found in the alpha subunit.</text>
</comment>
<comment type="catalytic activity">
    <reaction evidence="1">
        <text>succinate + ATP + CoA = succinyl-CoA + ADP + phosphate</text>
        <dbReference type="Rhea" id="RHEA:17661"/>
        <dbReference type="ChEBI" id="CHEBI:30031"/>
        <dbReference type="ChEBI" id="CHEBI:30616"/>
        <dbReference type="ChEBI" id="CHEBI:43474"/>
        <dbReference type="ChEBI" id="CHEBI:57287"/>
        <dbReference type="ChEBI" id="CHEBI:57292"/>
        <dbReference type="ChEBI" id="CHEBI:456216"/>
        <dbReference type="EC" id="6.2.1.5"/>
    </reaction>
    <physiologicalReaction direction="right-to-left" evidence="1">
        <dbReference type="Rhea" id="RHEA:17663"/>
    </physiologicalReaction>
</comment>
<comment type="catalytic activity">
    <reaction evidence="1">
        <text>GTP + succinate + CoA = succinyl-CoA + GDP + phosphate</text>
        <dbReference type="Rhea" id="RHEA:22120"/>
        <dbReference type="ChEBI" id="CHEBI:30031"/>
        <dbReference type="ChEBI" id="CHEBI:37565"/>
        <dbReference type="ChEBI" id="CHEBI:43474"/>
        <dbReference type="ChEBI" id="CHEBI:57287"/>
        <dbReference type="ChEBI" id="CHEBI:57292"/>
        <dbReference type="ChEBI" id="CHEBI:58189"/>
    </reaction>
    <physiologicalReaction direction="right-to-left" evidence="1">
        <dbReference type="Rhea" id="RHEA:22122"/>
    </physiologicalReaction>
</comment>
<comment type="cofactor">
    <cofactor evidence="1">
        <name>Mg(2+)</name>
        <dbReference type="ChEBI" id="CHEBI:18420"/>
    </cofactor>
    <text evidence="1">Binds 1 Mg(2+) ion per subunit.</text>
</comment>
<comment type="pathway">
    <text evidence="1">Carbohydrate metabolism; tricarboxylic acid cycle; succinate from succinyl-CoA (ligase route): step 1/1.</text>
</comment>
<comment type="subunit">
    <text evidence="1">Heterotetramer of two alpha and two beta subunits.</text>
</comment>
<comment type="similarity">
    <text evidence="1">Belongs to the succinate/malate CoA ligase beta subunit family.</text>
</comment>
<gene>
    <name evidence="1" type="primary">sucC</name>
    <name type="ordered locus">Adeh_1627</name>
</gene>
<sequence>MKIHEYQAKEILRKFGVAVPRGYLAVTPLEAEGAARQLGGGISAVKAQIHAGGRGKGGGVKLARSPDEARQHAEAMLGMMLKTPQTGPEGQEVRKVYVEEGCRIARELYLGMTLDREIGRLAVMASVEGGVDIEEVAAKHPDKILREWISPLTGLMPFQARRLAFGLGLSGDSVTAFVRFATGLYNAYVATDASLAEINPLVITVGGEVLALDAKMNFDDNALYRHPDIAAMRDPDEEDPKETQAKEYDLSYIALDGDIGCMVNGAGLAMATMDVIKLSGGQPANFLDVGGGADEDKVTAAFKIILSDPHVKAVLVNIFGGIMKCDVIANGIVAAAKQVGLSIPLVVRLEGTNVELGKEILAHSELKIIPADDLGEAARKAVQAARAA</sequence>
<dbReference type="EC" id="6.2.1.5" evidence="1"/>
<dbReference type="EMBL" id="CP000251">
    <property type="protein sequence ID" value="ABC81400.1"/>
    <property type="molecule type" value="Genomic_DNA"/>
</dbReference>
<dbReference type="RefSeq" id="WP_011420683.1">
    <property type="nucleotide sequence ID" value="NC_007760.1"/>
</dbReference>
<dbReference type="SMR" id="Q2IIC1"/>
<dbReference type="STRING" id="290397.Adeh_1627"/>
<dbReference type="KEGG" id="ade:Adeh_1627"/>
<dbReference type="eggNOG" id="COG0045">
    <property type="taxonomic scope" value="Bacteria"/>
</dbReference>
<dbReference type="HOGENOM" id="CLU_037430_0_2_7"/>
<dbReference type="OrthoDB" id="9802602at2"/>
<dbReference type="UniPathway" id="UPA00223">
    <property type="reaction ID" value="UER00999"/>
</dbReference>
<dbReference type="Proteomes" id="UP000001935">
    <property type="component" value="Chromosome"/>
</dbReference>
<dbReference type="GO" id="GO:0005829">
    <property type="term" value="C:cytosol"/>
    <property type="evidence" value="ECO:0007669"/>
    <property type="project" value="TreeGrafter"/>
</dbReference>
<dbReference type="GO" id="GO:0042709">
    <property type="term" value="C:succinate-CoA ligase complex"/>
    <property type="evidence" value="ECO:0007669"/>
    <property type="project" value="TreeGrafter"/>
</dbReference>
<dbReference type="GO" id="GO:0005524">
    <property type="term" value="F:ATP binding"/>
    <property type="evidence" value="ECO:0007669"/>
    <property type="project" value="UniProtKB-UniRule"/>
</dbReference>
<dbReference type="GO" id="GO:0000287">
    <property type="term" value="F:magnesium ion binding"/>
    <property type="evidence" value="ECO:0007669"/>
    <property type="project" value="UniProtKB-UniRule"/>
</dbReference>
<dbReference type="GO" id="GO:0004775">
    <property type="term" value="F:succinate-CoA ligase (ADP-forming) activity"/>
    <property type="evidence" value="ECO:0007669"/>
    <property type="project" value="UniProtKB-UniRule"/>
</dbReference>
<dbReference type="GO" id="GO:0004776">
    <property type="term" value="F:succinate-CoA ligase (GDP-forming) activity"/>
    <property type="evidence" value="ECO:0007669"/>
    <property type="project" value="RHEA"/>
</dbReference>
<dbReference type="GO" id="GO:0006104">
    <property type="term" value="P:succinyl-CoA metabolic process"/>
    <property type="evidence" value="ECO:0007669"/>
    <property type="project" value="TreeGrafter"/>
</dbReference>
<dbReference type="GO" id="GO:0006099">
    <property type="term" value="P:tricarboxylic acid cycle"/>
    <property type="evidence" value="ECO:0007669"/>
    <property type="project" value="UniProtKB-UniRule"/>
</dbReference>
<dbReference type="FunFam" id="3.30.1490.20:FF:000002">
    <property type="entry name" value="Succinate--CoA ligase [ADP-forming] subunit beta"/>
    <property type="match status" value="1"/>
</dbReference>
<dbReference type="FunFam" id="3.30.470.20:FF:000002">
    <property type="entry name" value="Succinate--CoA ligase [ADP-forming] subunit beta"/>
    <property type="match status" value="1"/>
</dbReference>
<dbReference type="FunFam" id="3.40.50.261:FF:000001">
    <property type="entry name" value="Succinate--CoA ligase [ADP-forming] subunit beta"/>
    <property type="match status" value="1"/>
</dbReference>
<dbReference type="Gene3D" id="3.30.1490.20">
    <property type="entry name" value="ATP-grasp fold, A domain"/>
    <property type="match status" value="1"/>
</dbReference>
<dbReference type="Gene3D" id="3.30.470.20">
    <property type="entry name" value="ATP-grasp fold, B domain"/>
    <property type="match status" value="1"/>
</dbReference>
<dbReference type="Gene3D" id="3.40.50.261">
    <property type="entry name" value="Succinyl-CoA synthetase domains"/>
    <property type="match status" value="1"/>
</dbReference>
<dbReference type="HAMAP" id="MF_00558">
    <property type="entry name" value="Succ_CoA_beta"/>
    <property type="match status" value="1"/>
</dbReference>
<dbReference type="InterPro" id="IPR013650">
    <property type="entry name" value="ATP-grasp_succ-CoA_synth-type"/>
</dbReference>
<dbReference type="InterPro" id="IPR013815">
    <property type="entry name" value="ATP_grasp_subdomain_1"/>
</dbReference>
<dbReference type="InterPro" id="IPR017866">
    <property type="entry name" value="Succ-CoA_synthase_bsu_CS"/>
</dbReference>
<dbReference type="InterPro" id="IPR005811">
    <property type="entry name" value="SUCC_ACL_C"/>
</dbReference>
<dbReference type="InterPro" id="IPR005809">
    <property type="entry name" value="Succ_CoA_ligase-like_bsu"/>
</dbReference>
<dbReference type="InterPro" id="IPR016102">
    <property type="entry name" value="Succinyl-CoA_synth-like"/>
</dbReference>
<dbReference type="NCBIfam" id="NF001913">
    <property type="entry name" value="PRK00696.1"/>
    <property type="match status" value="1"/>
</dbReference>
<dbReference type="NCBIfam" id="TIGR01016">
    <property type="entry name" value="sucCoAbeta"/>
    <property type="match status" value="1"/>
</dbReference>
<dbReference type="PANTHER" id="PTHR11815:SF10">
    <property type="entry name" value="SUCCINATE--COA LIGASE [GDP-FORMING] SUBUNIT BETA, MITOCHONDRIAL"/>
    <property type="match status" value="1"/>
</dbReference>
<dbReference type="PANTHER" id="PTHR11815">
    <property type="entry name" value="SUCCINYL-COA SYNTHETASE BETA CHAIN"/>
    <property type="match status" value="1"/>
</dbReference>
<dbReference type="Pfam" id="PF08442">
    <property type="entry name" value="ATP-grasp_2"/>
    <property type="match status" value="1"/>
</dbReference>
<dbReference type="Pfam" id="PF00549">
    <property type="entry name" value="Ligase_CoA"/>
    <property type="match status" value="1"/>
</dbReference>
<dbReference type="PIRSF" id="PIRSF001554">
    <property type="entry name" value="SucCS_beta"/>
    <property type="match status" value="1"/>
</dbReference>
<dbReference type="SUPFAM" id="SSF56059">
    <property type="entry name" value="Glutathione synthetase ATP-binding domain-like"/>
    <property type="match status" value="1"/>
</dbReference>
<dbReference type="SUPFAM" id="SSF52210">
    <property type="entry name" value="Succinyl-CoA synthetase domains"/>
    <property type="match status" value="1"/>
</dbReference>
<dbReference type="PROSITE" id="PS01217">
    <property type="entry name" value="SUCCINYL_COA_LIG_3"/>
    <property type="match status" value="1"/>
</dbReference>
<reference key="1">
    <citation type="submission" date="2006-01" db="EMBL/GenBank/DDBJ databases">
        <title>Complete sequence of Anaeromyxobacter dehalogenans 2CP-C.</title>
        <authorList>
            <person name="Copeland A."/>
            <person name="Lucas S."/>
            <person name="Lapidus A."/>
            <person name="Barry K."/>
            <person name="Detter J.C."/>
            <person name="Glavina T."/>
            <person name="Hammon N."/>
            <person name="Israni S."/>
            <person name="Pitluck S."/>
            <person name="Brettin T."/>
            <person name="Bruce D."/>
            <person name="Han C."/>
            <person name="Tapia R."/>
            <person name="Gilna P."/>
            <person name="Kiss H."/>
            <person name="Schmutz J."/>
            <person name="Larimer F."/>
            <person name="Land M."/>
            <person name="Kyrpides N."/>
            <person name="Anderson I."/>
            <person name="Sanford R.A."/>
            <person name="Ritalahti K.M."/>
            <person name="Thomas H.S."/>
            <person name="Kirby J.R."/>
            <person name="Zhulin I.B."/>
            <person name="Loeffler F.E."/>
            <person name="Richardson P."/>
        </authorList>
    </citation>
    <scope>NUCLEOTIDE SEQUENCE [LARGE SCALE GENOMIC DNA]</scope>
    <source>
        <strain>2CP-C</strain>
    </source>
</reference>
<evidence type="ECO:0000255" key="1">
    <source>
        <dbReference type="HAMAP-Rule" id="MF_00558"/>
    </source>
</evidence>
<name>SUCC_ANADE</name>
<accession>Q2IIC1</accession>
<organism>
    <name type="scientific">Anaeromyxobacter dehalogenans (strain 2CP-C)</name>
    <dbReference type="NCBI Taxonomy" id="290397"/>
    <lineage>
        <taxon>Bacteria</taxon>
        <taxon>Pseudomonadati</taxon>
        <taxon>Myxococcota</taxon>
        <taxon>Myxococcia</taxon>
        <taxon>Myxococcales</taxon>
        <taxon>Cystobacterineae</taxon>
        <taxon>Anaeromyxobacteraceae</taxon>
        <taxon>Anaeromyxobacter</taxon>
    </lineage>
</organism>
<keyword id="KW-0067">ATP-binding</keyword>
<keyword id="KW-0436">Ligase</keyword>
<keyword id="KW-0460">Magnesium</keyword>
<keyword id="KW-0479">Metal-binding</keyword>
<keyword id="KW-0547">Nucleotide-binding</keyword>
<keyword id="KW-1185">Reference proteome</keyword>
<keyword id="KW-0816">Tricarboxylic acid cycle</keyword>
<feature type="chain" id="PRO_1000081998" description="Succinate--CoA ligase [ADP-forming] subunit beta">
    <location>
        <begin position="1"/>
        <end position="388"/>
    </location>
</feature>
<feature type="domain" description="ATP-grasp" evidence="1">
    <location>
        <begin position="9"/>
        <end position="244"/>
    </location>
</feature>
<feature type="binding site" evidence="1">
    <location>
        <position position="46"/>
    </location>
    <ligand>
        <name>ATP</name>
        <dbReference type="ChEBI" id="CHEBI:30616"/>
    </ligand>
</feature>
<feature type="binding site" evidence="1">
    <location>
        <begin position="53"/>
        <end position="55"/>
    </location>
    <ligand>
        <name>ATP</name>
        <dbReference type="ChEBI" id="CHEBI:30616"/>
    </ligand>
</feature>
<feature type="binding site" evidence="1">
    <location>
        <position position="99"/>
    </location>
    <ligand>
        <name>ATP</name>
        <dbReference type="ChEBI" id="CHEBI:30616"/>
    </ligand>
</feature>
<feature type="binding site" evidence="1">
    <location>
        <position position="102"/>
    </location>
    <ligand>
        <name>ATP</name>
        <dbReference type="ChEBI" id="CHEBI:30616"/>
    </ligand>
</feature>
<feature type="binding site" evidence="1">
    <location>
        <position position="107"/>
    </location>
    <ligand>
        <name>ATP</name>
        <dbReference type="ChEBI" id="CHEBI:30616"/>
    </ligand>
</feature>
<feature type="binding site" evidence="1">
    <location>
        <position position="199"/>
    </location>
    <ligand>
        <name>Mg(2+)</name>
        <dbReference type="ChEBI" id="CHEBI:18420"/>
    </ligand>
</feature>
<feature type="binding site" evidence="1">
    <location>
        <position position="213"/>
    </location>
    <ligand>
        <name>Mg(2+)</name>
        <dbReference type="ChEBI" id="CHEBI:18420"/>
    </ligand>
</feature>
<feature type="binding site" evidence="1">
    <location>
        <position position="264"/>
    </location>
    <ligand>
        <name>substrate</name>
        <note>ligand shared with subunit alpha</note>
    </ligand>
</feature>
<feature type="binding site" evidence="1">
    <location>
        <begin position="321"/>
        <end position="323"/>
    </location>
    <ligand>
        <name>substrate</name>
        <note>ligand shared with subunit alpha</note>
    </ligand>
</feature>